<organism>
    <name type="scientific">Yersinia pseudotuberculosis serotype IB (strain PB1/+)</name>
    <dbReference type="NCBI Taxonomy" id="502801"/>
    <lineage>
        <taxon>Bacteria</taxon>
        <taxon>Pseudomonadati</taxon>
        <taxon>Pseudomonadota</taxon>
        <taxon>Gammaproteobacteria</taxon>
        <taxon>Enterobacterales</taxon>
        <taxon>Yersiniaceae</taxon>
        <taxon>Yersinia</taxon>
    </lineage>
</organism>
<accession>B2K8E3</accession>
<dbReference type="EMBL" id="CP001048">
    <property type="protein sequence ID" value="ACC88193.1"/>
    <property type="molecule type" value="Genomic_DNA"/>
</dbReference>
<dbReference type="RefSeq" id="WP_002224622.1">
    <property type="nucleotide sequence ID" value="NZ_CP009780.1"/>
</dbReference>
<dbReference type="SMR" id="B2K8E3"/>
<dbReference type="GeneID" id="49786790"/>
<dbReference type="KEGG" id="ypb:YPTS_1218"/>
<dbReference type="PATRIC" id="fig|502801.10.peg.567"/>
<dbReference type="GO" id="GO:0005829">
    <property type="term" value="C:cytosol"/>
    <property type="evidence" value="ECO:0007669"/>
    <property type="project" value="TreeGrafter"/>
</dbReference>
<dbReference type="GO" id="GO:0000774">
    <property type="term" value="F:adenyl-nucleotide exchange factor activity"/>
    <property type="evidence" value="ECO:0007669"/>
    <property type="project" value="InterPro"/>
</dbReference>
<dbReference type="GO" id="GO:0042803">
    <property type="term" value="F:protein homodimerization activity"/>
    <property type="evidence" value="ECO:0007669"/>
    <property type="project" value="InterPro"/>
</dbReference>
<dbReference type="GO" id="GO:0051087">
    <property type="term" value="F:protein-folding chaperone binding"/>
    <property type="evidence" value="ECO:0007669"/>
    <property type="project" value="InterPro"/>
</dbReference>
<dbReference type="GO" id="GO:0051082">
    <property type="term" value="F:unfolded protein binding"/>
    <property type="evidence" value="ECO:0007669"/>
    <property type="project" value="TreeGrafter"/>
</dbReference>
<dbReference type="GO" id="GO:0006457">
    <property type="term" value="P:protein folding"/>
    <property type="evidence" value="ECO:0007669"/>
    <property type="project" value="InterPro"/>
</dbReference>
<dbReference type="CDD" id="cd00446">
    <property type="entry name" value="GrpE"/>
    <property type="match status" value="1"/>
</dbReference>
<dbReference type="FunFam" id="2.30.22.10:FF:000001">
    <property type="entry name" value="Protein GrpE"/>
    <property type="match status" value="1"/>
</dbReference>
<dbReference type="FunFam" id="3.90.20.20:FF:000001">
    <property type="entry name" value="Protein GrpE"/>
    <property type="match status" value="1"/>
</dbReference>
<dbReference type="Gene3D" id="3.90.20.20">
    <property type="match status" value="1"/>
</dbReference>
<dbReference type="Gene3D" id="2.30.22.10">
    <property type="entry name" value="Head domain of nucleotide exchange factor GrpE"/>
    <property type="match status" value="1"/>
</dbReference>
<dbReference type="HAMAP" id="MF_01151">
    <property type="entry name" value="GrpE"/>
    <property type="match status" value="1"/>
</dbReference>
<dbReference type="InterPro" id="IPR000740">
    <property type="entry name" value="GrpE"/>
</dbReference>
<dbReference type="InterPro" id="IPR013805">
    <property type="entry name" value="GrpE_coiled_coil"/>
</dbReference>
<dbReference type="InterPro" id="IPR009012">
    <property type="entry name" value="GrpE_head"/>
</dbReference>
<dbReference type="NCBIfam" id="NF010737">
    <property type="entry name" value="PRK14139.1"/>
    <property type="match status" value="1"/>
</dbReference>
<dbReference type="NCBIfam" id="NF010738">
    <property type="entry name" value="PRK14140.1"/>
    <property type="match status" value="1"/>
</dbReference>
<dbReference type="NCBIfam" id="NF010748">
    <property type="entry name" value="PRK14150.1"/>
    <property type="match status" value="1"/>
</dbReference>
<dbReference type="PANTHER" id="PTHR21237">
    <property type="entry name" value="GRPE PROTEIN"/>
    <property type="match status" value="1"/>
</dbReference>
<dbReference type="PANTHER" id="PTHR21237:SF23">
    <property type="entry name" value="GRPE PROTEIN HOMOLOG, MITOCHONDRIAL"/>
    <property type="match status" value="1"/>
</dbReference>
<dbReference type="Pfam" id="PF01025">
    <property type="entry name" value="GrpE"/>
    <property type="match status" value="1"/>
</dbReference>
<dbReference type="PRINTS" id="PR00773">
    <property type="entry name" value="GRPEPROTEIN"/>
</dbReference>
<dbReference type="SUPFAM" id="SSF58014">
    <property type="entry name" value="Coiled-coil domain of nucleotide exchange factor GrpE"/>
    <property type="match status" value="1"/>
</dbReference>
<dbReference type="SUPFAM" id="SSF51064">
    <property type="entry name" value="Head domain of nucleotide exchange factor GrpE"/>
    <property type="match status" value="1"/>
</dbReference>
<dbReference type="PROSITE" id="PS01071">
    <property type="entry name" value="GRPE"/>
    <property type="match status" value="1"/>
</dbReference>
<evidence type="ECO:0000255" key="1">
    <source>
        <dbReference type="HAMAP-Rule" id="MF_01151"/>
    </source>
</evidence>
<evidence type="ECO:0000256" key="2">
    <source>
        <dbReference type="SAM" id="MobiDB-lite"/>
    </source>
</evidence>
<name>GRPE_YERPB</name>
<protein>
    <recommendedName>
        <fullName evidence="1">Protein GrpE</fullName>
    </recommendedName>
    <alternativeName>
        <fullName evidence="1">HSP-70 cofactor</fullName>
    </alternativeName>
</protein>
<proteinExistence type="inferred from homology"/>
<reference key="1">
    <citation type="submission" date="2008-04" db="EMBL/GenBank/DDBJ databases">
        <title>Complete sequence of Yersinia pseudotuberculosis PB1/+.</title>
        <authorList>
            <person name="Copeland A."/>
            <person name="Lucas S."/>
            <person name="Lapidus A."/>
            <person name="Glavina del Rio T."/>
            <person name="Dalin E."/>
            <person name="Tice H."/>
            <person name="Bruce D."/>
            <person name="Goodwin L."/>
            <person name="Pitluck S."/>
            <person name="Munk A.C."/>
            <person name="Brettin T."/>
            <person name="Detter J.C."/>
            <person name="Han C."/>
            <person name="Tapia R."/>
            <person name="Schmutz J."/>
            <person name="Larimer F."/>
            <person name="Land M."/>
            <person name="Hauser L."/>
            <person name="Challacombe J.F."/>
            <person name="Green L."/>
            <person name="Lindler L.E."/>
            <person name="Nikolich M.P."/>
            <person name="Richardson P."/>
        </authorList>
    </citation>
    <scope>NUCLEOTIDE SEQUENCE [LARGE SCALE GENOMIC DNA]</scope>
    <source>
        <strain>PB1/+</strain>
    </source>
</reference>
<gene>
    <name evidence="1" type="primary">grpE</name>
    <name type="ordered locus">YPTS_1218</name>
</gene>
<feature type="chain" id="PRO_1000137644" description="Protein GrpE">
    <location>
        <begin position="1"/>
        <end position="192"/>
    </location>
</feature>
<feature type="region of interest" description="Disordered" evidence="2">
    <location>
        <begin position="1"/>
        <end position="34"/>
    </location>
</feature>
<feature type="compositionally biased region" description="Polar residues" evidence="2">
    <location>
        <begin position="20"/>
        <end position="31"/>
    </location>
</feature>
<sequence>MSSKEQKTPNEQVSEEMENTAEQQVEATQETGECVDPRVAELEVQLSDALQRERESLLRAKAEVENIRRRTELDVEKAHKFALERFSSELLPVIDNLERALDTADKTNTELTSMIEGVELTLKSLLDAVGKFGIEVVGETHVPFNPEVHQAMTMLESADHEPNHVMMVMQKGYTLNGRLLRPAMVAVSKAKS</sequence>
<comment type="function">
    <text evidence="1">Participates actively in the response to hyperosmotic and heat shock by preventing the aggregation of stress-denatured proteins, in association with DnaK and GrpE. It is the nucleotide exchange factor for DnaK and may function as a thermosensor. Unfolded proteins bind initially to DnaJ; upon interaction with the DnaJ-bound protein, DnaK hydrolyzes its bound ATP, resulting in the formation of a stable complex. GrpE releases ADP from DnaK; ATP binding to DnaK triggers the release of the substrate protein, thus completing the reaction cycle. Several rounds of ATP-dependent interactions between DnaJ, DnaK and GrpE are required for fully efficient folding.</text>
</comment>
<comment type="subunit">
    <text evidence="1">Homodimer.</text>
</comment>
<comment type="subcellular location">
    <subcellularLocation>
        <location evidence="1">Cytoplasm</location>
    </subcellularLocation>
</comment>
<comment type="similarity">
    <text evidence="1">Belongs to the GrpE family.</text>
</comment>
<keyword id="KW-0143">Chaperone</keyword>
<keyword id="KW-0963">Cytoplasm</keyword>
<keyword id="KW-0346">Stress response</keyword>